<proteinExistence type="evidence at protein level"/>
<keyword id="KW-0025">Alternative splicing</keyword>
<keyword id="KW-0496">Mitochondrion</keyword>
<keyword id="KW-0597">Phosphoprotein</keyword>
<keyword id="KW-1185">Reference proteome</keyword>
<keyword id="KW-0677">Repeat</keyword>
<accession>Q9CPV4</accession>
<accession>Q3UUS8</accession>
<accession>Q9CY26</accession>
<accession>Q9D9F5</accession>
<dbReference type="EMBL" id="AK006979">
    <property type="protein sequence ID" value="BAB24818.1"/>
    <property type="molecule type" value="mRNA"/>
</dbReference>
<dbReference type="EMBL" id="AK010992">
    <property type="protein sequence ID" value="BAB27311.1"/>
    <property type="molecule type" value="mRNA"/>
</dbReference>
<dbReference type="EMBL" id="AK012569">
    <property type="protein sequence ID" value="BAB28324.1"/>
    <property type="molecule type" value="mRNA"/>
</dbReference>
<dbReference type="EMBL" id="AK013212">
    <property type="protein sequence ID" value="BAB28716.1"/>
    <property type="molecule type" value="mRNA"/>
</dbReference>
<dbReference type="EMBL" id="AK138073">
    <property type="protein sequence ID" value="BAE23546.1"/>
    <property type="molecule type" value="mRNA"/>
</dbReference>
<dbReference type="EMBL" id="AL591129">
    <property type="status" value="NOT_ANNOTATED_CDS"/>
    <property type="molecule type" value="Genomic_DNA"/>
</dbReference>
<dbReference type="EMBL" id="BC061012">
    <property type="protein sequence ID" value="AAH61012.1"/>
    <property type="molecule type" value="mRNA"/>
</dbReference>
<dbReference type="CCDS" id="CCDS25063.1">
    <molecule id="Q9CPV4-1"/>
</dbReference>
<dbReference type="CCDS" id="CCDS88193.1">
    <molecule id="Q9CPV4-3"/>
</dbReference>
<dbReference type="RefSeq" id="NP_001349830.1">
    <molecule id="Q9CPV4-3"/>
    <property type="nucleotide sequence ID" value="NM_001362901.1"/>
</dbReference>
<dbReference type="RefSeq" id="NP_080305.2">
    <molecule id="Q9CPV4-1"/>
    <property type="nucleotide sequence ID" value="NM_026029.3"/>
</dbReference>
<dbReference type="RefSeq" id="XP_006534033.1">
    <property type="nucleotide sequence ID" value="XM_006533970.3"/>
</dbReference>
<dbReference type="SMR" id="Q9CPV4"/>
<dbReference type="BioGRID" id="212012">
    <property type="interactions" value="3"/>
</dbReference>
<dbReference type="FunCoup" id="Q9CPV4">
    <property type="interactions" value="2491"/>
</dbReference>
<dbReference type="IntAct" id="Q9CPV4">
    <property type="interactions" value="1"/>
</dbReference>
<dbReference type="STRING" id="10090.ENSMUSP00000017430"/>
<dbReference type="GlyGen" id="Q9CPV4">
    <property type="glycosylation" value="1 site, 1 O-linked glycan (1 site)"/>
</dbReference>
<dbReference type="iPTMnet" id="Q9CPV4"/>
<dbReference type="PhosphoSitePlus" id="Q9CPV4"/>
<dbReference type="SwissPalm" id="Q9CPV4"/>
<dbReference type="REPRODUCTION-2DPAGE" id="Q9CPV4"/>
<dbReference type="CPTAC" id="non-CPTAC-3812"/>
<dbReference type="jPOST" id="Q9CPV4"/>
<dbReference type="PaxDb" id="10090-ENSMUSP00000017430"/>
<dbReference type="PeptideAtlas" id="Q9CPV4"/>
<dbReference type="ProteomicsDB" id="266812">
    <molecule id="Q9CPV4-1"/>
</dbReference>
<dbReference type="ProteomicsDB" id="266813">
    <molecule id="Q9CPV4-2"/>
</dbReference>
<dbReference type="ProteomicsDB" id="266814">
    <molecule id="Q9CPV4-3"/>
</dbReference>
<dbReference type="Pumba" id="Q9CPV4"/>
<dbReference type="Antibodypedia" id="10285">
    <property type="antibodies" value="115 antibodies from 25 providers"/>
</dbReference>
<dbReference type="DNASU" id="67201"/>
<dbReference type="Ensembl" id="ENSMUST00000017430.12">
    <molecule id="Q9CPV4-1"/>
    <property type="protein sequence ID" value="ENSMUSP00000017430.6"/>
    <property type="gene ID" value="ENSMUSG00000017286.16"/>
</dbReference>
<dbReference type="Ensembl" id="ENSMUST00000170710.8">
    <molecule id="Q9CPV4-3"/>
    <property type="protein sequence ID" value="ENSMUSP00000131788.2"/>
    <property type="gene ID" value="ENSMUSG00000017286.16"/>
</dbReference>
<dbReference type="GeneID" id="67201"/>
<dbReference type="KEGG" id="mmu:67201"/>
<dbReference type="UCSC" id="uc007kfc.2">
    <molecule id="Q9CPV4-2"/>
    <property type="organism name" value="mouse"/>
</dbReference>
<dbReference type="UCSC" id="uc007kfl.2">
    <molecule id="Q9CPV4-1"/>
    <property type="organism name" value="mouse"/>
</dbReference>
<dbReference type="AGR" id="MGI:1914451"/>
<dbReference type="CTD" id="51031"/>
<dbReference type="MGI" id="MGI:1914451">
    <property type="gene designation" value="Glod4"/>
</dbReference>
<dbReference type="VEuPathDB" id="HostDB:ENSMUSG00000017286"/>
<dbReference type="eggNOG" id="KOG2943">
    <property type="taxonomic scope" value="Eukaryota"/>
</dbReference>
<dbReference type="GeneTree" id="ENSGT00390000012340"/>
<dbReference type="InParanoid" id="Q9CPV4"/>
<dbReference type="OMA" id="CDAECNG"/>
<dbReference type="OrthoDB" id="6160at9989"/>
<dbReference type="PhylomeDB" id="Q9CPV4"/>
<dbReference type="TreeFam" id="TF105801"/>
<dbReference type="BioGRID-ORCS" id="67201">
    <property type="hits" value="1 hit in 76 CRISPR screens"/>
</dbReference>
<dbReference type="ChiTaRS" id="Glod4">
    <property type="organism name" value="mouse"/>
</dbReference>
<dbReference type="PRO" id="PR:Q9CPV4"/>
<dbReference type="Proteomes" id="UP000000589">
    <property type="component" value="Chromosome 11"/>
</dbReference>
<dbReference type="RNAct" id="Q9CPV4">
    <property type="molecule type" value="protein"/>
</dbReference>
<dbReference type="Bgee" id="ENSMUSG00000017286">
    <property type="expression patterns" value="Expressed in ureteric bud tip and 264 other cell types or tissues"/>
</dbReference>
<dbReference type="ExpressionAtlas" id="Q9CPV4">
    <property type="expression patterns" value="baseline and differential"/>
</dbReference>
<dbReference type="GO" id="GO:0005739">
    <property type="term" value="C:mitochondrion"/>
    <property type="evidence" value="ECO:0007005"/>
    <property type="project" value="MGI"/>
</dbReference>
<dbReference type="CDD" id="cd16357">
    <property type="entry name" value="GLOD4_C"/>
    <property type="match status" value="1"/>
</dbReference>
<dbReference type="CDD" id="cd08358">
    <property type="entry name" value="GLOD4_N"/>
    <property type="match status" value="1"/>
</dbReference>
<dbReference type="FunFam" id="3.10.180.10:FF:000010">
    <property type="entry name" value="Glyoxalase domain-containing protein 4"/>
    <property type="match status" value="1"/>
</dbReference>
<dbReference type="FunFam" id="3.10.180.10:FF:000014">
    <property type="entry name" value="glyoxalase domain-containing protein 4"/>
    <property type="match status" value="1"/>
</dbReference>
<dbReference type="Gene3D" id="3.10.180.10">
    <property type="entry name" value="2,3-Dihydroxybiphenyl 1,2-Dioxygenase, domain 1"/>
    <property type="match status" value="2"/>
</dbReference>
<dbReference type="InterPro" id="IPR043193">
    <property type="entry name" value="GLOD4"/>
</dbReference>
<dbReference type="InterPro" id="IPR043194">
    <property type="entry name" value="GLOD4_C"/>
</dbReference>
<dbReference type="InterPro" id="IPR029068">
    <property type="entry name" value="Glyas_Bleomycin-R_OHBP_Dase"/>
</dbReference>
<dbReference type="InterPro" id="IPR037523">
    <property type="entry name" value="VOC"/>
</dbReference>
<dbReference type="PANTHER" id="PTHR46466">
    <property type="entry name" value="GLYOXALASE DOMAIN-CONTAINING PROTEIN 4"/>
    <property type="match status" value="1"/>
</dbReference>
<dbReference type="PANTHER" id="PTHR46466:SF1">
    <property type="entry name" value="GLYOXALASE DOMAIN-CONTAINING PROTEIN 4"/>
    <property type="match status" value="1"/>
</dbReference>
<dbReference type="Pfam" id="PF21701">
    <property type="entry name" value="GLOD4_C"/>
    <property type="match status" value="1"/>
</dbReference>
<dbReference type="Pfam" id="PF21207">
    <property type="entry name" value="GLOD4_N"/>
    <property type="match status" value="1"/>
</dbReference>
<dbReference type="SUPFAM" id="SSF54593">
    <property type="entry name" value="Glyoxalase/Bleomycin resistance protein/Dihydroxybiphenyl dioxygenase"/>
    <property type="match status" value="1"/>
</dbReference>
<dbReference type="PROSITE" id="PS51819">
    <property type="entry name" value="VOC"/>
    <property type="match status" value="2"/>
</dbReference>
<evidence type="ECO:0000250" key="1"/>
<evidence type="ECO:0000255" key="2">
    <source>
        <dbReference type="PROSITE-ProRule" id="PRU01163"/>
    </source>
</evidence>
<evidence type="ECO:0000303" key="3">
    <source>
    </source>
</evidence>
<evidence type="ECO:0000305" key="4"/>
<evidence type="ECO:0007744" key="5">
    <source>
    </source>
</evidence>
<evidence type="ECO:0007744" key="6">
    <source>
    </source>
</evidence>
<name>GLOD4_MOUSE</name>
<comment type="subunit">
    <text evidence="1">Interacts with NUDT9.</text>
</comment>
<comment type="subcellular location">
    <subcellularLocation>
        <location evidence="1">Mitochondrion</location>
    </subcellularLocation>
</comment>
<comment type="alternative products">
    <event type="alternative splicing"/>
    <isoform>
        <id>Q9CPV4-1</id>
        <name>1</name>
        <sequence type="displayed"/>
    </isoform>
    <isoform>
        <id>Q9CPV4-2</id>
        <name>2</name>
        <sequence type="described" ref="VSP_023650 VSP_023651"/>
    </isoform>
    <isoform>
        <id>Q9CPV4-3</id>
        <name>3</name>
        <sequence type="described" ref="VSP_023649"/>
    </isoform>
</comment>
<comment type="similarity">
    <text evidence="4">Belongs to the glyoxalase I family.</text>
</comment>
<reference key="1">
    <citation type="journal article" date="2005" name="Science">
        <title>The transcriptional landscape of the mammalian genome.</title>
        <authorList>
            <person name="Carninci P."/>
            <person name="Kasukawa T."/>
            <person name="Katayama S."/>
            <person name="Gough J."/>
            <person name="Frith M.C."/>
            <person name="Maeda N."/>
            <person name="Oyama R."/>
            <person name="Ravasi T."/>
            <person name="Lenhard B."/>
            <person name="Wells C."/>
            <person name="Kodzius R."/>
            <person name="Shimokawa K."/>
            <person name="Bajic V.B."/>
            <person name="Brenner S.E."/>
            <person name="Batalov S."/>
            <person name="Forrest A.R."/>
            <person name="Zavolan M."/>
            <person name="Davis M.J."/>
            <person name="Wilming L.G."/>
            <person name="Aidinis V."/>
            <person name="Allen J.E."/>
            <person name="Ambesi-Impiombato A."/>
            <person name="Apweiler R."/>
            <person name="Aturaliya R.N."/>
            <person name="Bailey T.L."/>
            <person name="Bansal M."/>
            <person name="Baxter L."/>
            <person name="Beisel K.W."/>
            <person name="Bersano T."/>
            <person name="Bono H."/>
            <person name="Chalk A.M."/>
            <person name="Chiu K.P."/>
            <person name="Choudhary V."/>
            <person name="Christoffels A."/>
            <person name="Clutterbuck D.R."/>
            <person name="Crowe M.L."/>
            <person name="Dalla E."/>
            <person name="Dalrymple B.P."/>
            <person name="de Bono B."/>
            <person name="Della Gatta G."/>
            <person name="di Bernardo D."/>
            <person name="Down T."/>
            <person name="Engstrom P."/>
            <person name="Fagiolini M."/>
            <person name="Faulkner G."/>
            <person name="Fletcher C.F."/>
            <person name="Fukushima T."/>
            <person name="Furuno M."/>
            <person name="Futaki S."/>
            <person name="Gariboldi M."/>
            <person name="Georgii-Hemming P."/>
            <person name="Gingeras T.R."/>
            <person name="Gojobori T."/>
            <person name="Green R.E."/>
            <person name="Gustincich S."/>
            <person name="Harbers M."/>
            <person name="Hayashi Y."/>
            <person name="Hensch T.K."/>
            <person name="Hirokawa N."/>
            <person name="Hill D."/>
            <person name="Huminiecki L."/>
            <person name="Iacono M."/>
            <person name="Ikeo K."/>
            <person name="Iwama A."/>
            <person name="Ishikawa T."/>
            <person name="Jakt M."/>
            <person name="Kanapin A."/>
            <person name="Katoh M."/>
            <person name="Kawasawa Y."/>
            <person name="Kelso J."/>
            <person name="Kitamura H."/>
            <person name="Kitano H."/>
            <person name="Kollias G."/>
            <person name="Krishnan S.P."/>
            <person name="Kruger A."/>
            <person name="Kummerfeld S.K."/>
            <person name="Kurochkin I.V."/>
            <person name="Lareau L.F."/>
            <person name="Lazarevic D."/>
            <person name="Lipovich L."/>
            <person name="Liu J."/>
            <person name="Liuni S."/>
            <person name="McWilliam S."/>
            <person name="Madan Babu M."/>
            <person name="Madera M."/>
            <person name="Marchionni L."/>
            <person name="Matsuda H."/>
            <person name="Matsuzawa S."/>
            <person name="Miki H."/>
            <person name="Mignone F."/>
            <person name="Miyake S."/>
            <person name="Morris K."/>
            <person name="Mottagui-Tabar S."/>
            <person name="Mulder N."/>
            <person name="Nakano N."/>
            <person name="Nakauchi H."/>
            <person name="Ng P."/>
            <person name="Nilsson R."/>
            <person name="Nishiguchi S."/>
            <person name="Nishikawa S."/>
            <person name="Nori F."/>
            <person name="Ohara O."/>
            <person name="Okazaki Y."/>
            <person name="Orlando V."/>
            <person name="Pang K.C."/>
            <person name="Pavan W.J."/>
            <person name="Pavesi G."/>
            <person name="Pesole G."/>
            <person name="Petrovsky N."/>
            <person name="Piazza S."/>
            <person name="Reed J."/>
            <person name="Reid J.F."/>
            <person name="Ring B.Z."/>
            <person name="Ringwald M."/>
            <person name="Rost B."/>
            <person name="Ruan Y."/>
            <person name="Salzberg S.L."/>
            <person name="Sandelin A."/>
            <person name="Schneider C."/>
            <person name="Schoenbach C."/>
            <person name="Sekiguchi K."/>
            <person name="Semple C.A."/>
            <person name="Seno S."/>
            <person name="Sessa L."/>
            <person name="Sheng Y."/>
            <person name="Shibata Y."/>
            <person name="Shimada H."/>
            <person name="Shimada K."/>
            <person name="Silva D."/>
            <person name="Sinclair B."/>
            <person name="Sperling S."/>
            <person name="Stupka E."/>
            <person name="Sugiura K."/>
            <person name="Sultana R."/>
            <person name="Takenaka Y."/>
            <person name="Taki K."/>
            <person name="Tammoja K."/>
            <person name="Tan S.L."/>
            <person name="Tang S."/>
            <person name="Taylor M.S."/>
            <person name="Tegner J."/>
            <person name="Teichmann S.A."/>
            <person name="Ueda H.R."/>
            <person name="van Nimwegen E."/>
            <person name="Verardo R."/>
            <person name="Wei C.L."/>
            <person name="Yagi K."/>
            <person name="Yamanishi H."/>
            <person name="Zabarovsky E."/>
            <person name="Zhu S."/>
            <person name="Zimmer A."/>
            <person name="Hide W."/>
            <person name="Bult C."/>
            <person name="Grimmond S.M."/>
            <person name="Teasdale R.D."/>
            <person name="Liu E.T."/>
            <person name="Brusic V."/>
            <person name="Quackenbush J."/>
            <person name="Wahlestedt C."/>
            <person name="Mattick J.S."/>
            <person name="Hume D.A."/>
            <person name="Kai C."/>
            <person name="Sasaki D."/>
            <person name="Tomaru Y."/>
            <person name="Fukuda S."/>
            <person name="Kanamori-Katayama M."/>
            <person name="Suzuki M."/>
            <person name="Aoki J."/>
            <person name="Arakawa T."/>
            <person name="Iida J."/>
            <person name="Imamura K."/>
            <person name="Itoh M."/>
            <person name="Kato T."/>
            <person name="Kawaji H."/>
            <person name="Kawagashira N."/>
            <person name="Kawashima T."/>
            <person name="Kojima M."/>
            <person name="Kondo S."/>
            <person name="Konno H."/>
            <person name="Nakano K."/>
            <person name="Ninomiya N."/>
            <person name="Nishio T."/>
            <person name="Okada M."/>
            <person name="Plessy C."/>
            <person name="Shibata K."/>
            <person name="Shiraki T."/>
            <person name="Suzuki S."/>
            <person name="Tagami M."/>
            <person name="Waki K."/>
            <person name="Watahiki A."/>
            <person name="Okamura-Oho Y."/>
            <person name="Suzuki H."/>
            <person name="Kawai J."/>
            <person name="Hayashizaki Y."/>
        </authorList>
    </citation>
    <scope>NUCLEOTIDE SEQUENCE [LARGE SCALE MRNA] (ISOFORMS 1; 2 AND 3)</scope>
    <source>
        <strain>C57BL/6J</strain>
        <tissue>Embryo</tissue>
        <tissue>Liver</tissue>
        <tissue>Testis</tissue>
        <tissue>Thymus</tissue>
    </source>
</reference>
<reference key="2">
    <citation type="journal article" date="2009" name="PLoS Biol.">
        <title>Lineage-specific biology revealed by a finished genome assembly of the mouse.</title>
        <authorList>
            <person name="Church D.M."/>
            <person name="Goodstadt L."/>
            <person name="Hillier L.W."/>
            <person name="Zody M.C."/>
            <person name="Goldstein S."/>
            <person name="She X."/>
            <person name="Bult C.J."/>
            <person name="Agarwala R."/>
            <person name="Cherry J.L."/>
            <person name="DiCuccio M."/>
            <person name="Hlavina W."/>
            <person name="Kapustin Y."/>
            <person name="Meric P."/>
            <person name="Maglott D."/>
            <person name="Birtle Z."/>
            <person name="Marques A.C."/>
            <person name="Graves T."/>
            <person name="Zhou S."/>
            <person name="Teague B."/>
            <person name="Potamousis K."/>
            <person name="Churas C."/>
            <person name="Place M."/>
            <person name="Herschleb J."/>
            <person name="Runnheim R."/>
            <person name="Forrest D."/>
            <person name="Amos-Landgraf J."/>
            <person name="Schwartz D.C."/>
            <person name="Cheng Z."/>
            <person name="Lindblad-Toh K."/>
            <person name="Eichler E.E."/>
            <person name="Ponting C.P."/>
        </authorList>
    </citation>
    <scope>NUCLEOTIDE SEQUENCE [LARGE SCALE GENOMIC DNA]</scope>
    <source>
        <strain>C57BL/6J</strain>
    </source>
</reference>
<reference key="3">
    <citation type="journal article" date="2004" name="Genome Res.">
        <title>The status, quality, and expansion of the NIH full-length cDNA project: the Mammalian Gene Collection (MGC).</title>
        <authorList>
            <consortium name="The MGC Project Team"/>
        </authorList>
    </citation>
    <scope>NUCLEOTIDE SEQUENCE [LARGE SCALE MRNA] (ISOFORM 1)</scope>
    <source>
        <tissue>Brain</tissue>
    </source>
</reference>
<reference key="4">
    <citation type="journal article" date="2010" name="Cell">
        <title>A tissue-specific atlas of mouse protein phosphorylation and expression.</title>
        <authorList>
            <person name="Huttlin E.L."/>
            <person name="Jedrychowski M.P."/>
            <person name="Elias J.E."/>
            <person name="Goswami T."/>
            <person name="Rad R."/>
            <person name="Beausoleil S.A."/>
            <person name="Villen J."/>
            <person name="Haas W."/>
            <person name="Sowa M.E."/>
            <person name="Gygi S.P."/>
        </authorList>
    </citation>
    <scope>PHOSPHORYLATION [LARGE SCALE ANALYSIS] AT SER-131</scope>
    <scope>IDENTIFICATION BY MASS SPECTROMETRY [LARGE SCALE ANALYSIS]</scope>
    <source>
        <tissue>Brain</tissue>
        <tissue>Brown adipose tissue</tissue>
        <tissue>Heart</tissue>
        <tissue>Kidney</tissue>
        <tissue>Liver</tissue>
        <tissue>Lung</tissue>
        <tissue>Pancreas</tissue>
        <tissue>Spleen</tissue>
        <tissue>Testis</tissue>
    </source>
</reference>
<reference key="5">
    <citation type="journal article" date="2013" name="Mol. Cell">
        <title>SIRT5-mediated lysine desuccinylation impacts diverse metabolic pathways.</title>
        <authorList>
            <person name="Park J."/>
            <person name="Chen Y."/>
            <person name="Tishkoff D.X."/>
            <person name="Peng C."/>
            <person name="Tan M."/>
            <person name="Dai L."/>
            <person name="Xie Z."/>
            <person name="Zhang Y."/>
            <person name="Zwaans B.M."/>
            <person name="Skinner M.E."/>
            <person name="Lombard D.B."/>
            <person name="Zhao Y."/>
        </authorList>
    </citation>
    <scope>SUCCINYLATION [LARGE SCALE ANALYSIS] AT LYS-109 AND LYS-273</scope>
    <scope>IDENTIFICATION BY MASS SPECTROMETRY [LARGE SCALE ANALYSIS]</scope>
    <source>
        <tissue>Liver</tissue>
    </source>
</reference>
<sequence>MATRRALHFVFKVKNRFQTVHFFRDVLGMQVLRHEEFEEGCKAACNGPYDGKWSKTMVGFGPEDDHFVAELTYNYGIGDYKLGNDFMGITLASSQAVSNARKLEWPLSKVAEGIFETEAPGGYKFYLQDRSPSQSDPVLKVTLAVSDLQKSLNYWSNLLGMKIYEQDEEKQRALLGYADNQCKLELQGIQGAVDHAAAFGRIAFSCPQKELPDLEDLMKRESHSILTPLVSLDTPGKATVQVVILADPDGHEICFVGDEAFRELSKMDPKGSKLLDDAMEADKSDEWFATRNKPKASG</sequence>
<gene>
    <name type="primary">Glod4</name>
</gene>
<organism>
    <name type="scientific">Mus musculus</name>
    <name type="common">Mouse</name>
    <dbReference type="NCBI Taxonomy" id="10090"/>
    <lineage>
        <taxon>Eukaryota</taxon>
        <taxon>Metazoa</taxon>
        <taxon>Chordata</taxon>
        <taxon>Craniata</taxon>
        <taxon>Vertebrata</taxon>
        <taxon>Euteleostomi</taxon>
        <taxon>Mammalia</taxon>
        <taxon>Eutheria</taxon>
        <taxon>Euarchontoglires</taxon>
        <taxon>Glires</taxon>
        <taxon>Rodentia</taxon>
        <taxon>Myomorpha</taxon>
        <taxon>Muroidea</taxon>
        <taxon>Muridae</taxon>
        <taxon>Murinae</taxon>
        <taxon>Mus</taxon>
        <taxon>Mus</taxon>
    </lineage>
</organism>
<protein>
    <recommendedName>
        <fullName>Glyoxalase domain-containing protein 4</fullName>
    </recommendedName>
</protein>
<feature type="chain" id="PRO_0000280392" description="Glyoxalase domain-containing protein 4">
    <location>
        <begin position="1"/>
        <end position="298"/>
    </location>
</feature>
<feature type="domain" description="VOC 1" evidence="2">
    <location>
        <begin position="5"/>
        <end position="130"/>
    </location>
</feature>
<feature type="domain" description="VOC 2" evidence="2">
    <location>
        <begin position="137"/>
        <end position="258"/>
    </location>
</feature>
<feature type="modified residue" description="N6-succinyllysine" evidence="6">
    <location>
        <position position="109"/>
    </location>
</feature>
<feature type="modified residue" description="Phosphoserine" evidence="5">
    <location>
        <position position="131"/>
    </location>
</feature>
<feature type="modified residue" description="N6-succinyllysine" evidence="6">
    <location>
        <position position="273"/>
    </location>
</feature>
<feature type="splice variant" id="VSP_023649" description="In isoform 3." evidence="3">
    <original>MATRRALHFVFKVKNRFQTVHFFRDVLGMQ</original>
    <variation>MICGSVLNSPD</variation>
    <location>
        <begin position="1"/>
        <end position="30"/>
    </location>
</feature>
<feature type="splice variant" id="VSP_023650" description="In isoform 2." evidence="3">
    <original>AMEADKSDEWFATR</original>
    <variation>GEGCTDRVRTANPG</variation>
    <location>
        <begin position="278"/>
        <end position="291"/>
    </location>
</feature>
<feature type="splice variant" id="VSP_023651" description="In isoform 2." evidence="3">
    <location>
        <begin position="292"/>
        <end position="298"/>
    </location>
</feature>
<feature type="sequence conflict" description="In Ref. 1; BAB27311." evidence="4" ref="1">
    <original>N</original>
    <variation>Y</variation>
    <location>
        <position position="46"/>
    </location>
</feature>
<feature type="sequence conflict" description="In Ref. 1; BAB24818." evidence="4" ref="1">
    <original>N</original>
    <variation>K</variation>
    <location>
        <position position="84"/>
    </location>
</feature>
<feature type="sequence conflict" description="In Ref. 1; BAB27311." evidence="4" ref="1">
    <original>L</original>
    <variation>I</variation>
    <location>
        <position position="214"/>
    </location>
</feature>